<feature type="chain" id="PRO_0000172263" description="S-ribosylhomocysteine lyase">
    <location>
        <begin position="1"/>
        <end position="160"/>
    </location>
</feature>
<feature type="binding site" evidence="1">
    <location>
        <position position="57"/>
    </location>
    <ligand>
        <name>Fe cation</name>
        <dbReference type="ChEBI" id="CHEBI:24875"/>
    </ligand>
</feature>
<feature type="binding site" evidence="1">
    <location>
        <position position="61"/>
    </location>
    <ligand>
        <name>Fe cation</name>
        <dbReference type="ChEBI" id="CHEBI:24875"/>
    </ligand>
</feature>
<feature type="binding site" evidence="1">
    <location>
        <position position="127"/>
    </location>
    <ligand>
        <name>Fe cation</name>
        <dbReference type="ChEBI" id="CHEBI:24875"/>
    </ligand>
</feature>
<sequence>MSKEVIVESFELDHTIVKAPYVRLIGEESGPKGDVISNFDIRLVQPNEDSIPTAGLHTIEHLLAMLIRKRIDGMIDCSPFGCRTGFHMIMWGRHTPSEIAQVIKSCLEEIAETTTWEDVPGTTIESCGNYKDHSLFSAKEWAKLILKQGISDNAFERHVI</sequence>
<keyword id="KW-0071">Autoinducer synthesis</keyword>
<keyword id="KW-0408">Iron</keyword>
<keyword id="KW-0456">Lyase</keyword>
<keyword id="KW-0479">Metal-binding</keyword>
<keyword id="KW-0673">Quorum sensing</keyword>
<keyword id="KW-1185">Reference proteome</keyword>
<reference key="1">
    <citation type="submission" date="2002-03" db="EMBL/GenBank/DDBJ databases">
        <title>Communication among oral bacterial cells.</title>
        <authorList>
            <person name="Kolenbrander P.E."/>
            <person name="Andersen R.N."/>
            <person name="Blehert D.S."/>
            <person name="Foster J.S."/>
            <person name="Egland P.G."/>
            <person name="Palmer R.J. Jr."/>
        </authorList>
    </citation>
    <scope>NUCLEOTIDE SEQUENCE [GENOMIC DNA]</scope>
</reference>
<reference key="2">
    <citation type="journal article" date="2007" name="J. Bacteriol.">
        <title>Genome-wide transcriptional changes in Streptococcus gordonii in response to competence signaling peptide.</title>
        <authorList>
            <person name="Vickerman M.M."/>
            <person name="Iobst S."/>
            <person name="Jesionowski A.M."/>
            <person name="Gill S.R."/>
        </authorList>
    </citation>
    <scope>NUCLEOTIDE SEQUENCE [LARGE SCALE GENOMIC DNA]</scope>
    <source>
        <strain>Challis / ATCC 35105 / BCRC 15272 / CH1 / DL1 / V288</strain>
    </source>
</reference>
<organism>
    <name type="scientific">Streptococcus gordonii (strain Challis / ATCC 35105 / BCRC 15272 / CH1 / DL1 / V288)</name>
    <dbReference type="NCBI Taxonomy" id="467705"/>
    <lineage>
        <taxon>Bacteria</taxon>
        <taxon>Bacillati</taxon>
        <taxon>Bacillota</taxon>
        <taxon>Bacilli</taxon>
        <taxon>Lactobacillales</taxon>
        <taxon>Streptococcaceae</taxon>
        <taxon>Streptococcus</taxon>
    </lineage>
</organism>
<name>LUXS_STRGC</name>
<protein>
    <recommendedName>
        <fullName evidence="1">S-ribosylhomocysteine lyase</fullName>
        <ecNumber evidence="1">4.4.1.21</ecNumber>
    </recommendedName>
    <alternativeName>
        <fullName evidence="1">AI-2 synthesis protein</fullName>
    </alternativeName>
    <alternativeName>
        <fullName evidence="1">Autoinducer-2 production protein LuxS</fullName>
    </alternativeName>
</protein>
<evidence type="ECO:0000255" key="1">
    <source>
        <dbReference type="HAMAP-Rule" id="MF_00091"/>
    </source>
</evidence>
<comment type="function">
    <text evidence="1">Involved in the synthesis of autoinducer 2 (AI-2) which is secreted by bacteria and is used to communicate both the cell density and the metabolic potential of the environment. The regulation of gene expression in response to changes in cell density is called quorum sensing. Catalyzes the transformation of S-ribosylhomocysteine (RHC) to homocysteine (HC) and 4,5-dihydroxy-2,3-pentadione (DPD).</text>
</comment>
<comment type="catalytic activity">
    <reaction evidence="1">
        <text>S-(5-deoxy-D-ribos-5-yl)-L-homocysteine = (S)-4,5-dihydroxypentane-2,3-dione + L-homocysteine</text>
        <dbReference type="Rhea" id="RHEA:17753"/>
        <dbReference type="ChEBI" id="CHEBI:29484"/>
        <dbReference type="ChEBI" id="CHEBI:58195"/>
        <dbReference type="ChEBI" id="CHEBI:58199"/>
        <dbReference type="EC" id="4.4.1.21"/>
    </reaction>
</comment>
<comment type="cofactor">
    <cofactor evidence="1">
        <name>Fe cation</name>
        <dbReference type="ChEBI" id="CHEBI:24875"/>
    </cofactor>
    <text evidence="1">Binds 1 Fe cation per subunit.</text>
</comment>
<comment type="subunit">
    <text evidence="1">Homodimer.</text>
</comment>
<comment type="similarity">
    <text evidence="1">Belongs to the LuxS family.</text>
</comment>
<accession>Q8KQK6</accession>
<accession>A8AVU8</accession>
<proteinExistence type="inferred from homology"/>
<dbReference type="EC" id="4.4.1.21" evidence="1"/>
<dbReference type="EMBL" id="AY081773">
    <property type="protein sequence ID" value="AAL87464.1"/>
    <property type="molecule type" value="Genomic_DNA"/>
</dbReference>
<dbReference type="EMBL" id="CP000725">
    <property type="protein sequence ID" value="ABV09736.1"/>
    <property type="molecule type" value="Genomic_DNA"/>
</dbReference>
<dbReference type="RefSeq" id="WP_008808586.1">
    <property type="nucleotide sequence ID" value="NC_009785.1"/>
</dbReference>
<dbReference type="SMR" id="Q8KQK6"/>
<dbReference type="STRING" id="467705.SGO_0592"/>
<dbReference type="KEGG" id="sgo:SGO_0592"/>
<dbReference type="eggNOG" id="COG1854">
    <property type="taxonomic scope" value="Bacteria"/>
</dbReference>
<dbReference type="HOGENOM" id="CLU_107531_2_1_9"/>
<dbReference type="Proteomes" id="UP000001131">
    <property type="component" value="Chromosome"/>
</dbReference>
<dbReference type="GO" id="GO:0005506">
    <property type="term" value="F:iron ion binding"/>
    <property type="evidence" value="ECO:0007669"/>
    <property type="project" value="InterPro"/>
</dbReference>
<dbReference type="GO" id="GO:0043768">
    <property type="term" value="F:S-ribosylhomocysteine lyase activity"/>
    <property type="evidence" value="ECO:0007669"/>
    <property type="project" value="UniProtKB-UniRule"/>
</dbReference>
<dbReference type="GO" id="GO:0009372">
    <property type="term" value="P:quorum sensing"/>
    <property type="evidence" value="ECO:0007669"/>
    <property type="project" value="UniProtKB-UniRule"/>
</dbReference>
<dbReference type="Gene3D" id="3.30.1360.80">
    <property type="entry name" value="S-ribosylhomocysteinase (LuxS)"/>
    <property type="match status" value="1"/>
</dbReference>
<dbReference type="HAMAP" id="MF_00091">
    <property type="entry name" value="LuxS"/>
    <property type="match status" value="1"/>
</dbReference>
<dbReference type="InterPro" id="IPR037005">
    <property type="entry name" value="LuxS_sf"/>
</dbReference>
<dbReference type="InterPro" id="IPR011249">
    <property type="entry name" value="Metalloenz_LuxS/M16"/>
</dbReference>
<dbReference type="InterPro" id="IPR003815">
    <property type="entry name" value="S-ribosylhomocysteinase"/>
</dbReference>
<dbReference type="NCBIfam" id="NF002607">
    <property type="entry name" value="PRK02260.2-5"/>
    <property type="match status" value="1"/>
</dbReference>
<dbReference type="NCBIfam" id="NF002608">
    <property type="entry name" value="PRK02260.3-1"/>
    <property type="match status" value="1"/>
</dbReference>
<dbReference type="PANTHER" id="PTHR35799">
    <property type="entry name" value="S-RIBOSYLHOMOCYSTEINE LYASE"/>
    <property type="match status" value="1"/>
</dbReference>
<dbReference type="PANTHER" id="PTHR35799:SF1">
    <property type="entry name" value="S-RIBOSYLHOMOCYSTEINE LYASE"/>
    <property type="match status" value="1"/>
</dbReference>
<dbReference type="Pfam" id="PF02664">
    <property type="entry name" value="LuxS"/>
    <property type="match status" value="1"/>
</dbReference>
<dbReference type="PIRSF" id="PIRSF006160">
    <property type="entry name" value="AI2"/>
    <property type="match status" value="1"/>
</dbReference>
<dbReference type="PRINTS" id="PR01487">
    <property type="entry name" value="LUXSPROTEIN"/>
</dbReference>
<dbReference type="SUPFAM" id="SSF63411">
    <property type="entry name" value="LuxS/MPP-like metallohydrolase"/>
    <property type="match status" value="1"/>
</dbReference>
<gene>
    <name evidence="1" type="primary">luxS</name>
    <name type="ordered locus">SGO_0592</name>
</gene>